<comment type="catalytic activity">
    <reaction evidence="1">
        <text>acetaldehyde + NAD(+) + CoA = acetyl-CoA + NADH + H(+)</text>
        <dbReference type="Rhea" id="RHEA:23288"/>
        <dbReference type="ChEBI" id="CHEBI:15343"/>
        <dbReference type="ChEBI" id="CHEBI:15378"/>
        <dbReference type="ChEBI" id="CHEBI:57287"/>
        <dbReference type="ChEBI" id="CHEBI:57288"/>
        <dbReference type="ChEBI" id="CHEBI:57540"/>
        <dbReference type="ChEBI" id="CHEBI:57945"/>
        <dbReference type="EC" id="1.2.1.10"/>
    </reaction>
</comment>
<comment type="similarity">
    <text evidence="1">Belongs to the acetaldehyde dehydrogenase family.</text>
</comment>
<accession>Q479G9</accession>
<dbReference type="EC" id="1.2.1.10" evidence="1"/>
<dbReference type="EMBL" id="CP000089">
    <property type="protein sequence ID" value="AAZ48512.1"/>
    <property type="molecule type" value="Genomic_DNA"/>
</dbReference>
<dbReference type="SMR" id="Q479G9"/>
<dbReference type="STRING" id="159087.Daro_3783"/>
<dbReference type="KEGG" id="dar:Daro_3783"/>
<dbReference type="eggNOG" id="COG4569">
    <property type="taxonomic scope" value="Bacteria"/>
</dbReference>
<dbReference type="HOGENOM" id="CLU_062208_0_0_4"/>
<dbReference type="OrthoDB" id="9786743at2"/>
<dbReference type="GO" id="GO:0008774">
    <property type="term" value="F:acetaldehyde dehydrogenase (acetylating) activity"/>
    <property type="evidence" value="ECO:0007669"/>
    <property type="project" value="UniProtKB-UniRule"/>
</dbReference>
<dbReference type="GO" id="GO:0051287">
    <property type="term" value="F:NAD binding"/>
    <property type="evidence" value="ECO:0007669"/>
    <property type="project" value="UniProtKB-UniRule"/>
</dbReference>
<dbReference type="GO" id="GO:0009056">
    <property type="term" value="P:catabolic process"/>
    <property type="evidence" value="ECO:0007669"/>
    <property type="project" value="UniProtKB-KW"/>
</dbReference>
<dbReference type="CDD" id="cd23933">
    <property type="entry name" value="ALDH_C"/>
    <property type="match status" value="1"/>
</dbReference>
<dbReference type="Gene3D" id="3.30.360.10">
    <property type="entry name" value="Dihydrodipicolinate Reductase, domain 2"/>
    <property type="match status" value="1"/>
</dbReference>
<dbReference type="Gene3D" id="3.40.50.720">
    <property type="entry name" value="NAD(P)-binding Rossmann-like Domain"/>
    <property type="match status" value="1"/>
</dbReference>
<dbReference type="HAMAP" id="MF_01657">
    <property type="entry name" value="Ac_ald_DH_ac"/>
    <property type="match status" value="1"/>
</dbReference>
<dbReference type="InterPro" id="IPR003361">
    <property type="entry name" value="Acetaldehyde_dehydrogenase"/>
</dbReference>
<dbReference type="InterPro" id="IPR015426">
    <property type="entry name" value="Acetylaldehyde_DH_C"/>
</dbReference>
<dbReference type="InterPro" id="IPR036291">
    <property type="entry name" value="NAD(P)-bd_dom_sf"/>
</dbReference>
<dbReference type="InterPro" id="IPR000534">
    <property type="entry name" value="Semialdehyde_DH_NAD-bd"/>
</dbReference>
<dbReference type="NCBIfam" id="TIGR03215">
    <property type="entry name" value="ac_ald_DH_ac"/>
    <property type="match status" value="1"/>
</dbReference>
<dbReference type="NCBIfam" id="NF006157">
    <property type="entry name" value="PRK08300.1"/>
    <property type="match status" value="1"/>
</dbReference>
<dbReference type="Pfam" id="PF09290">
    <property type="entry name" value="AcetDehyd-dimer"/>
    <property type="match status" value="1"/>
</dbReference>
<dbReference type="PIRSF" id="PIRSF015689">
    <property type="entry name" value="Actaldh_dh_actl"/>
    <property type="match status" value="1"/>
</dbReference>
<dbReference type="SMART" id="SM00859">
    <property type="entry name" value="Semialdhyde_dh"/>
    <property type="match status" value="1"/>
</dbReference>
<dbReference type="SUPFAM" id="SSF55347">
    <property type="entry name" value="Glyceraldehyde-3-phosphate dehydrogenase-like, C-terminal domain"/>
    <property type="match status" value="1"/>
</dbReference>
<dbReference type="SUPFAM" id="SSF51735">
    <property type="entry name" value="NAD(P)-binding Rossmann-fold domains"/>
    <property type="match status" value="1"/>
</dbReference>
<protein>
    <recommendedName>
        <fullName evidence="1">Acetaldehyde dehydrogenase 4</fullName>
        <ecNumber evidence="1">1.2.1.10</ecNumber>
    </recommendedName>
    <alternativeName>
        <fullName evidence="1">Acetaldehyde dehydrogenase [acetylating] 4</fullName>
    </alternativeName>
</protein>
<feature type="chain" id="PRO_0000387656" description="Acetaldehyde dehydrogenase 4">
    <location>
        <begin position="1"/>
        <end position="304"/>
    </location>
</feature>
<feature type="active site" description="Acyl-thioester intermediate" evidence="1">
    <location>
        <position position="131"/>
    </location>
</feature>
<feature type="binding site" evidence="1">
    <location>
        <begin position="162"/>
        <end position="170"/>
    </location>
    <ligand>
        <name>NAD(+)</name>
        <dbReference type="ChEBI" id="CHEBI:57540"/>
    </ligand>
</feature>
<feature type="binding site" evidence="1">
    <location>
        <position position="273"/>
    </location>
    <ligand>
        <name>NAD(+)</name>
        <dbReference type="ChEBI" id="CHEBI:57540"/>
    </ligand>
</feature>
<keyword id="KW-0058">Aromatic hydrocarbons catabolism</keyword>
<keyword id="KW-0520">NAD</keyword>
<keyword id="KW-0560">Oxidoreductase</keyword>
<evidence type="ECO:0000255" key="1">
    <source>
        <dbReference type="HAMAP-Rule" id="MF_01657"/>
    </source>
</evidence>
<sequence length="304" mass="32459">MTQKIKCALIGPGNIGTDLLYKLKRSPFLEPVWMIGIDPESEGLKRAAEMGLKTCATGVDGFLPHVLEDNVQIAFDATSAYVHAENSRKLNALGVLMIDLTPAAIGPFCVPPVNLKEHVGRREMNVNMVTCGGQATIPMVAAVSRVQPVAYGEIVATVSSKSAGPGTRKNIDEFTRTTAGAVEKVGGAKKGKAIIIINPAEPPLVMRDTVHCLTETAPDQAAITESIHAMIKEVQKYVPGYRLVNGPVFDGNRVSVYMEVTGLGDFLPTYAGNLDIMTAAGARTAEMFAEEMIKGTLKLEPVHA</sequence>
<organism>
    <name type="scientific">Dechloromonas aromatica (strain RCB)</name>
    <dbReference type="NCBI Taxonomy" id="159087"/>
    <lineage>
        <taxon>Bacteria</taxon>
        <taxon>Pseudomonadati</taxon>
        <taxon>Pseudomonadota</taxon>
        <taxon>Betaproteobacteria</taxon>
        <taxon>Rhodocyclales</taxon>
        <taxon>Azonexaceae</taxon>
        <taxon>Dechloromonas</taxon>
    </lineage>
</organism>
<proteinExistence type="inferred from homology"/>
<name>ACDH4_DECAR</name>
<reference key="1">
    <citation type="journal article" date="2009" name="BMC Genomics">
        <title>Metabolic analysis of the soil microbe Dechloromonas aromatica str. RCB: indications of a surprisingly complex life-style and cryptic anaerobic pathways for aromatic degradation.</title>
        <authorList>
            <person name="Salinero K.K."/>
            <person name="Keller K."/>
            <person name="Feil W.S."/>
            <person name="Feil H."/>
            <person name="Trong S."/>
            <person name="Di Bartolo G."/>
            <person name="Lapidus A."/>
        </authorList>
    </citation>
    <scope>NUCLEOTIDE SEQUENCE [LARGE SCALE GENOMIC DNA]</scope>
    <source>
        <strain>RCB</strain>
    </source>
</reference>
<gene>
    <name type="ordered locus">Daro_3783</name>
</gene>